<evidence type="ECO:0000255" key="1">
    <source>
        <dbReference type="HAMAP-Rule" id="MF_00093"/>
    </source>
</evidence>
<evidence type="ECO:0000256" key="2">
    <source>
        <dbReference type="SAM" id="MobiDB-lite"/>
    </source>
</evidence>
<reference key="1">
    <citation type="journal article" date="2003" name="J. Bacteriol.">
        <title>Comparative analyses of the complete genome sequences of Pierce's disease and citrus variegated chlorosis strains of Xylella fastidiosa.</title>
        <authorList>
            <person name="Van Sluys M.A."/>
            <person name="de Oliveira M.C."/>
            <person name="Monteiro-Vitorello C.B."/>
            <person name="Miyaki C.Y."/>
            <person name="Furlan L.R."/>
            <person name="Camargo L.E.A."/>
            <person name="da Silva A.C.R."/>
            <person name="Moon D.H."/>
            <person name="Takita M.A."/>
            <person name="Lemos E.G.M."/>
            <person name="Machado M.A."/>
            <person name="Ferro M.I.T."/>
            <person name="da Silva F.R."/>
            <person name="Goldman M.H.S."/>
            <person name="Goldman G.H."/>
            <person name="Lemos M.V.F."/>
            <person name="El-Dorry H."/>
            <person name="Tsai S.M."/>
            <person name="Carrer H."/>
            <person name="Carraro D.M."/>
            <person name="de Oliveira R.C."/>
            <person name="Nunes L.R."/>
            <person name="Siqueira W.J."/>
            <person name="Coutinho L.L."/>
            <person name="Kimura E.T."/>
            <person name="Ferro E.S."/>
            <person name="Harakava R."/>
            <person name="Kuramae E.E."/>
            <person name="Marino C.L."/>
            <person name="Giglioti E."/>
            <person name="Abreu I.L."/>
            <person name="Alves L.M.C."/>
            <person name="do Amaral A.M."/>
            <person name="Baia G.S."/>
            <person name="Blanco S.R."/>
            <person name="Brito M.S."/>
            <person name="Cannavan F.S."/>
            <person name="Celestino A.V."/>
            <person name="da Cunha A.F."/>
            <person name="Fenille R.C."/>
            <person name="Ferro J.A."/>
            <person name="Formighieri E.F."/>
            <person name="Kishi L.T."/>
            <person name="Leoni S.G."/>
            <person name="Oliveira A.R."/>
            <person name="Rosa V.E. Jr."/>
            <person name="Sassaki F.T."/>
            <person name="Sena J.A.D."/>
            <person name="de Souza A.A."/>
            <person name="Truffi D."/>
            <person name="Tsukumo F."/>
            <person name="Yanai G.M."/>
            <person name="Zaros L.G."/>
            <person name="Civerolo E.L."/>
            <person name="Simpson A.J.G."/>
            <person name="Almeida N.F. Jr."/>
            <person name="Setubal J.C."/>
            <person name="Kitajima J.P."/>
        </authorList>
    </citation>
    <scope>NUCLEOTIDE SEQUENCE [LARGE SCALE GENOMIC DNA]</scope>
    <source>
        <strain>Temecula1 / ATCC 700964</strain>
    </source>
</reference>
<name>RF1_XYLFT</name>
<comment type="function">
    <text evidence="1">Peptide chain release factor 1 directs the termination of translation in response to the peptide chain termination codons UAG and UAA.</text>
</comment>
<comment type="subcellular location">
    <subcellularLocation>
        <location evidence="1">Cytoplasm</location>
    </subcellularLocation>
</comment>
<comment type="PTM">
    <text evidence="1">Methylated by PrmC. Methylation increases the termination efficiency of RF1.</text>
</comment>
<comment type="similarity">
    <text evidence="1">Belongs to the prokaryotic/mitochondrial release factor family.</text>
</comment>
<keyword id="KW-0963">Cytoplasm</keyword>
<keyword id="KW-0488">Methylation</keyword>
<keyword id="KW-0648">Protein biosynthesis</keyword>
<keyword id="KW-1185">Reference proteome</keyword>
<proteinExistence type="inferred from homology"/>
<organism>
    <name type="scientific">Xylella fastidiosa (strain Temecula1 / ATCC 700964)</name>
    <dbReference type="NCBI Taxonomy" id="183190"/>
    <lineage>
        <taxon>Bacteria</taxon>
        <taxon>Pseudomonadati</taxon>
        <taxon>Pseudomonadota</taxon>
        <taxon>Gammaproteobacteria</taxon>
        <taxon>Lysobacterales</taxon>
        <taxon>Lysobacteraceae</taxon>
        <taxon>Xylella</taxon>
    </lineage>
</organism>
<dbReference type="EMBL" id="AE009442">
    <property type="protein sequence ID" value="AAO29846.1"/>
    <property type="molecule type" value="Genomic_DNA"/>
</dbReference>
<dbReference type="RefSeq" id="WP_004087401.1">
    <property type="nucleotide sequence ID" value="NC_004556.1"/>
</dbReference>
<dbReference type="SMR" id="Q87A17"/>
<dbReference type="KEGG" id="xft:PD_2022"/>
<dbReference type="HOGENOM" id="CLU_036856_0_1_6"/>
<dbReference type="Proteomes" id="UP000002516">
    <property type="component" value="Chromosome"/>
</dbReference>
<dbReference type="GO" id="GO:0005737">
    <property type="term" value="C:cytoplasm"/>
    <property type="evidence" value="ECO:0007669"/>
    <property type="project" value="UniProtKB-SubCell"/>
</dbReference>
<dbReference type="GO" id="GO:0016149">
    <property type="term" value="F:translation release factor activity, codon specific"/>
    <property type="evidence" value="ECO:0007669"/>
    <property type="project" value="UniProtKB-UniRule"/>
</dbReference>
<dbReference type="FunFam" id="3.30.160.20:FF:000004">
    <property type="entry name" value="Peptide chain release factor 1"/>
    <property type="match status" value="1"/>
</dbReference>
<dbReference type="FunFam" id="3.30.70.1660:FF:000002">
    <property type="entry name" value="Peptide chain release factor 1"/>
    <property type="match status" value="1"/>
</dbReference>
<dbReference type="FunFam" id="3.30.70.1660:FF:000004">
    <property type="entry name" value="Peptide chain release factor 1"/>
    <property type="match status" value="1"/>
</dbReference>
<dbReference type="Gene3D" id="3.30.160.20">
    <property type="match status" value="1"/>
</dbReference>
<dbReference type="Gene3D" id="3.30.70.1660">
    <property type="match status" value="2"/>
</dbReference>
<dbReference type="Gene3D" id="6.10.140.1950">
    <property type="match status" value="1"/>
</dbReference>
<dbReference type="HAMAP" id="MF_00093">
    <property type="entry name" value="Rel_fac_1"/>
    <property type="match status" value="1"/>
</dbReference>
<dbReference type="InterPro" id="IPR005139">
    <property type="entry name" value="PCRF"/>
</dbReference>
<dbReference type="InterPro" id="IPR000352">
    <property type="entry name" value="Pep_chain_release_fac_I"/>
</dbReference>
<dbReference type="InterPro" id="IPR045853">
    <property type="entry name" value="Pep_chain_release_fac_I_sf"/>
</dbReference>
<dbReference type="InterPro" id="IPR050057">
    <property type="entry name" value="Prokaryotic/Mito_RF"/>
</dbReference>
<dbReference type="InterPro" id="IPR004373">
    <property type="entry name" value="RF-1"/>
</dbReference>
<dbReference type="NCBIfam" id="TIGR00019">
    <property type="entry name" value="prfA"/>
    <property type="match status" value="1"/>
</dbReference>
<dbReference type="NCBIfam" id="NF001859">
    <property type="entry name" value="PRK00591.1"/>
    <property type="match status" value="1"/>
</dbReference>
<dbReference type="PANTHER" id="PTHR43804">
    <property type="entry name" value="LD18447P"/>
    <property type="match status" value="1"/>
</dbReference>
<dbReference type="PANTHER" id="PTHR43804:SF7">
    <property type="entry name" value="LD18447P"/>
    <property type="match status" value="1"/>
</dbReference>
<dbReference type="Pfam" id="PF03462">
    <property type="entry name" value="PCRF"/>
    <property type="match status" value="1"/>
</dbReference>
<dbReference type="Pfam" id="PF00472">
    <property type="entry name" value="RF-1"/>
    <property type="match status" value="1"/>
</dbReference>
<dbReference type="SMART" id="SM00937">
    <property type="entry name" value="PCRF"/>
    <property type="match status" value="1"/>
</dbReference>
<dbReference type="SUPFAM" id="SSF75620">
    <property type="entry name" value="Release factor"/>
    <property type="match status" value="1"/>
</dbReference>
<dbReference type="PROSITE" id="PS00745">
    <property type="entry name" value="RF_PROK_I"/>
    <property type="match status" value="1"/>
</dbReference>
<gene>
    <name evidence="1" type="primary">prfA</name>
    <name type="ordered locus">PD_2022</name>
</gene>
<accession>Q87A17</accession>
<feature type="chain" id="PRO_0000177775" description="Peptide chain release factor 1">
    <location>
        <begin position="1"/>
        <end position="361"/>
    </location>
</feature>
<feature type="region of interest" description="Disordered" evidence="2">
    <location>
        <begin position="283"/>
        <end position="306"/>
    </location>
</feature>
<feature type="modified residue" description="N5-methylglutamine" evidence="1">
    <location>
        <position position="235"/>
    </location>
</feature>
<sequence>MKPTLRRKLEALAERHEELERLLSDPKIASDTDRFRTYSRELAQLAPIATTLAEETRTKADLAAAETLRTDPEMRELAEQEIAIAQAHLTTLDEQLQRLLIPQDPRDECNLFLEVRAGTGGDEAAIFAGNLFRMYTRYAERQRWKVEVESDTPGEHGGYKEIIARIVGRGAYSRLKFESGTHRVQRVPATESQGRIHTSAATVAIIPEADEIADISINPADLKIDTFRSSGAGGQHVNKTESAIRITHLPTGVVVESQTERSQHANRDKAMKRLKAQLIESQRSQQATAEAMTRKLQVGSGDRSQRIRTYNFPQGRITDHRVENLTLYDLPNIIEGDLDPLIDRLRQEHQAEELARLSNAP</sequence>
<protein>
    <recommendedName>
        <fullName evidence="1">Peptide chain release factor 1</fullName>
        <shortName evidence="1">RF-1</shortName>
    </recommendedName>
</protein>